<accession>B7UI93</accession>
<keyword id="KW-0050">Antiport</keyword>
<keyword id="KW-0997">Cell inner membrane</keyword>
<keyword id="KW-1003">Cell membrane</keyword>
<keyword id="KW-0406">Ion transport</keyword>
<keyword id="KW-0472">Membrane</keyword>
<keyword id="KW-0630">Potassium</keyword>
<keyword id="KW-0633">Potassium transport</keyword>
<keyword id="KW-1185">Reference proteome</keyword>
<keyword id="KW-0812">Transmembrane</keyword>
<keyword id="KW-1133">Transmembrane helix</keyword>
<keyword id="KW-0813">Transport</keyword>
<protein>
    <recommendedName>
        <fullName evidence="1">Glutathione-regulated potassium-efflux system protein KefC</fullName>
    </recommendedName>
    <alternativeName>
        <fullName evidence="1">K(+)/H(+) antiporter</fullName>
    </alternativeName>
</protein>
<sequence length="620" mass="67748">MDSHTLIQALIYLGSAALIVPIAVRLGLGSVLGYLIAGCIIGPWGLRLVTDAESILHFAEIGVVLMLFIIGLELDPQRLWKLRAAVFGGGALQMVICGGLLGLFCMLLGLRWQVAELIGMTLALSSTAIAMQAMNERNLMVTQMGRSAFAVLLFQDIAAIPLVAMIPLLAASSASTTMGAFVLSALKVAGALVLVVLLGRYVTRPALRFVARSGLREVFSAVALFLVFGFGLLLEEVGLSMAMGAFLAGVLLASSEYRHALESDIEPFKGLLLGLFFIGVGMSIDFGTLLENPLRIVILLLGFLIIKIAMLWLIARPLQVPNKQRRWFAVLLGQGSEFAFVVFGAAQMANVLEPEWAKSLTLAVALSMAATPILLVILNRLEQSSTEEAREADEIDEEQPRVIIAGFGRFGQITGRLLLSSGVKMVVLDHDPDHIETLRKFGMKVFYGDATRMDLLESAGAAKAEVLINAIDDPQTNLQLTEMVKEHFPHLQIIARARDVDHYIRLRQAGVEKPERETFEGALKTGRLALESLGLGPYEARERADVFRRFNIQMVEEMAMVENDTKARAAVYKRTSAMLSEIITEDREHLSLIQRHGWQGTEEGKHTGNMADEPETKPSS</sequence>
<organism>
    <name type="scientific">Escherichia coli O127:H6 (strain E2348/69 / EPEC)</name>
    <dbReference type="NCBI Taxonomy" id="574521"/>
    <lineage>
        <taxon>Bacteria</taxon>
        <taxon>Pseudomonadati</taxon>
        <taxon>Pseudomonadota</taxon>
        <taxon>Gammaproteobacteria</taxon>
        <taxon>Enterobacterales</taxon>
        <taxon>Enterobacteriaceae</taxon>
        <taxon>Escherichia</taxon>
    </lineage>
</organism>
<gene>
    <name evidence="1" type="primary">kefC</name>
    <name type="ordered locus">E2348C_0048</name>
</gene>
<feature type="chain" id="PRO_1000184615" description="Glutathione-regulated potassium-efflux system protein KefC">
    <location>
        <begin position="1"/>
        <end position="620"/>
    </location>
</feature>
<feature type="transmembrane region" description="Helical" evidence="1">
    <location>
        <begin position="4"/>
        <end position="24"/>
    </location>
</feature>
<feature type="transmembrane region" description="Helical" evidence="1">
    <location>
        <begin position="26"/>
        <end position="46"/>
    </location>
</feature>
<feature type="transmembrane region" description="Helical" evidence="1">
    <location>
        <begin position="54"/>
        <end position="74"/>
    </location>
</feature>
<feature type="transmembrane region" description="Helical" evidence="1">
    <location>
        <begin position="90"/>
        <end position="110"/>
    </location>
</feature>
<feature type="transmembrane region" description="Helical" evidence="1">
    <location>
        <begin position="114"/>
        <end position="134"/>
    </location>
</feature>
<feature type="transmembrane region" description="Helical" evidence="1">
    <location>
        <begin position="149"/>
        <end position="169"/>
    </location>
</feature>
<feature type="transmembrane region" description="Helical" evidence="1">
    <location>
        <begin position="178"/>
        <end position="198"/>
    </location>
</feature>
<feature type="transmembrane region" description="Helical" evidence="1">
    <location>
        <begin position="218"/>
        <end position="238"/>
    </location>
</feature>
<feature type="transmembrane region" description="Helical" evidence="1">
    <location>
        <begin position="270"/>
        <end position="290"/>
    </location>
</feature>
<feature type="transmembrane region" description="Helical" evidence="1">
    <location>
        <begin position="294"/>
        <end position="314"/>
    </location>
</feature>
<feature type="transmembrane region" description="Helical" evidence="1">
    <location>
        <begin position="327"/>
        <end position="347"/>
    </location>
</feature>
<feature type="transmembrane region" description="Helical" evidence="1">
    <location>
        <begin position="359"/>
        <end position="379"/>
    </location>
</feature>
<feature type="domain" description="RCK N-terminal" evidence="2">
    <location>
        <begin position="399"/>
        <end position="518"/>
    </location>
</feature>
<feature type="region of interest" description="Disordered" evidence="3">
    <location>
        <begin position="597"/>
        <end position="620"/>
    </location>
</feature>
<evidence type="ECO:0000255" key="1">
    <source>
        <dbReference type="HAMAP-Rule" id="MF_01413"/>
    </source>
</evidence>
<evidence type="ECO:0000255" key="2">
    <source>
        <dbReference type="PROSITE-ProRule" id="PRU00543"/>
    </source>
</evidence>
<evidence type="ECO:0000256" key="3">
    <source>
        <dbReference type="SAM" id="MobiDB-lite"/>
    </source>
</evidence>
<name>KEFC_ECO27</name>
<reference key="1">
    <citation type="journal article" date="2009" name="J. Bacteriol.">
        <title>Complete genome sequence and comparative genome analysis of enteropathogenic Escherichia coli O127:H6 strain E2348/69.</title>
        <authorList>
            <person name="Iguchi A."/>
            <person name="Thomson N.R."/>
            <person name="Ogura Y."/>
            <person name="Saunders D."/>
            <person name="Ooka T."/>
            <person name="Henderson I.R."/>
            <person name="Harris D."/>
            <person name="Asadulghani M."/>
            <person name="Kurokawa K."/>
            <person name="Dean P."/>
            <person name="Kenny B."/>
            <person name="Quail M.A."/>
            <person name="Thurston S."/>
            <person name="Dougan G."/>
            <person name="Hayashi T."/>
            <person name="Parkhill J."/>
            <person name="Frankel G."/>
        </authorList>
    </citation>
    <scope>NUCLEOTIDE SEQUENCE [LARGE SCALE GENOMIC DNA]</scope>
    <source>
        <strain>E2348/69 / EPEC</strain>
    </source>
</reference>
<comment type="function">
    <text evidence="1">Pore-forming subunit of a potassium efflux system that confers protection against electrophiles. Catalyzes K(+)/H(+) antiport.</text>
</comment>
<comment type="subunit">
    <text evidence="1">Homodimer. Interacts with the regulatory subunit KefF.</text>
</comment>
<comment type="subcellular location">
    <subcellularLocation>
        <location evidence="1">Cell inner membrane</location>
        <topology evidence="1">Multi-pass membrane protein</topology>
    </subcellularLocation>
</comment>
<comment type="similarity">
    <text evidence="1">Belongs to the monovalent cation:proton antiporter 2 (CPA2) transporter (TC 2.A.37) family. KefC subfamily.</text>
</comment>
<dbReference type="EMBL" id="FM180568">
    <property type="protein sequence ID" value="CAS07596.1"/>
    <property type="molecule type" value="Genomic_DNA"/>
</dbReference>
<dbReference type="RefSeq" id="WP_000377124.1">
    <property type="nucleotide sequence ID" value="NC_011601.1"/>
</dbReference>
<dbReference type="SMR" id="B7UI93"/>
<dbReference type="KEGG" id="ecg:E2348C_0048"/>
<dbReference type="HOGENOM" id="CLU_005126_9_3_6"/>
<dbReference type="Proteomes" id="UP000008205">
    <property type="component" value="Chromosome"/>
</dbReference>
<dbReference type="GO" id="GO:0005886">
    <property type="term" value="C:plasma membrane"/>
    <property type="evidence" value="ECO:0007669"/>
    <property type="project" value="UniProtKB-SubCell"/>
</dbReference>
<dbReference type="GO" id="GO:0019899">
    <property type="term" value="F:enzyme binding"/>
    <property type="evidence" value="ECO:0007669"/>
    <property type="project" value="InterPro"/>
</dbReference>
<dbReference type="GO" id="GO:0015503">
    <property type="term" value="F:glutathione-regulated potassium exporter activity"/>
    <property type="evidence" value="ECO:0007669"/>
    <property type="project" value="UniProtKB-UniRule"/>
</dbReference>
<dbReference type="GO" id="GO:0015643">
    <property type="term" value="F:toxic substance binding"/>
    <property type="evidence" value="ECO:0007669"/>
    <property type="project" value="InterPro"/>
</dbReference>
<dbReference type="GO" id="GO:1902600">
    <property type="term" value="P:proton transmembrane transport"/>
    <property type="evidence" value="ECO:0007669"/>
    <property type="project" value="InterPro"/>
</dbReference>
<dbReference type="GO" id="GO:0051595">
    <property type="term" value="P:response to methylglyoxal"/>
    <property type="evidence" value="ECO:0007669"/>
    <property type="project" value="InterPro"/>
</dbReference>
<dbReference type="FunFam" id="1.20.1530.20:FF:000001">
    <property type="entry name" value="Glutathione-regulated potassium-efflux system protein KefB"/>
    <property type="match status" value="1"/>
</dbReference>
<dbReference type="FunFam" id="3.40.50.720:FF:000036">
    <property type="entry name" value="Glutathione-regulated potassium-efflux system protein KefB"/>
    <property type="match status" value="1"/>
</dbReference>
<dbReference type="Gene3D" id="1.20.1530.20">
    <property type="match status" value="1"/>
</dbReference>
<dbReference type="Gene3D" id="3.40.50.720">
    <property type="entry name" value="NAD(P)-binding Rossmann-like Domain"/>
    <property type="match status" value="1"/>
</dbReference>
<dbReference type="HAMAP" id="MF_01413">
    <property type="entry name" value="K_H_efflux_KefC"/>
    <property type="match status" value="1"/>
</dbReference>
<dbReference type="InterPro" id="IPR006153">
    <property type="entry name" value="Cation/H_exchanger_TM"/>
</dbReference>
<dbReference type="InterPro" id="IPR004771">
    <property type="entry name" value="K/H_exchanger"/>
</dbReference>
<dbReference type="InterPro" id="IPR023941">
    <property type="entry name" value="K_H_efflux_KefC"/>
</dbReference>
<dbReference type="InterPro" id="IPR006036">
    <property type="entry name" value="K_uptake_TrkA"/>
</dbReference>
<dbReference type="InterPro" id="IPR038770">
    <property type="entry name" value="Na+/solute_symporter_sf"/>
</dbReference>
<dbReference type="InterPro" id="IPR036291">
    <property type="entry name" value="NAD(P)-bd_dom_sf"/>
</dbReference>
<dbReference type="InterPro" id="IPR003148">
    <property type="entry name" value="RCK_N"/>
</dbReference>
<dbReference type="NCBIfam" id="TIGR00932">
    <property type="entry name" value="2a37"/>
    <property type="match status" value="1"/>
</dbReference>
<dbReference type="NCBIfam" id="NF002924">
    <property type="entry name" value="PRK03562.1"/>
    <property type="match status" value="1"/>
</dbReference>
<dbReference type="PANTHER" id="PTHR46157:SF3">
    <property type="entry name" value="GLUTATHIONE-REGULATED POTASSIUM-EFFLUX SYSTEM PROTEIN KEFC"/>
    <property type="match status" value="1"/>
</dbReference>
<dbReference type="PANTHER" id="PTHR46157">
    <property type="entry name" value="K(+) EFFLUX ANTIPORTER 3, CHLOROPLASTIC"/>
    <property type="match status" value="1"/>
</dbReference>
<dbReference type="Pfam" id="PF00999">
    <property type="entry name" value="Na_H_Exchanger"/>
    <property type="match status" value="1"/>
</dbReference>
<dbReference type="Pfam" id="PF02254">
    <property type="entry name" value="TrkA_N"/>
    <property type="match status" value="1"/>
</dbReference>
<dbReference type="PRINTS" id="PR00335">
    <property type="entry name" value="KUPTAKETRKA"/>
</dbReference>
<dbReference type="SUPFAM" id="SSF51735">
    <property type="entry name" value="NAD(P)-binding Rossmann-fold domains"/>
    <property type="match status" value="1"/>
</dbReference>
<dbReference type="PROSITE" id="PS51201">
    <property type="entry name" value="RCK_N"/>
    <property type="match status" value="1"/>
</dbReference>
<proteinExistence type="inferred from homology"/>